<sequence length="1464" mass="166925">MALSKAKGNDGKITYPPGVKEISDKISKEEMVRRLKMVVKTFMDMDQDSEEEKEQYLNLALHLASDFFLKHPDKDVRLLVACCLADIFRIYAPEAPYTSPDKLKDIFMFITRQLKGLEDTKSPQFNRYFYLLENIAWVKSYNICFELEDCNEIFTQLYRTLFSVINNGHNQKVHMHMVDLMSSIVCEGDTVSQELLDSVLVNLVPAHKNLNKQAYDLAKALLKRTAQAIEPYITNFFNQVLMLGKTSISDLSEHVFDLILELYNIDSHLLLSVLPQLEFKLKSNDNEERLQVVKLLAKMFGAKDSELASQNKPLWQCYLGRFNDIHVPIRLECVKFASHSLMNHPDLAKDLTEYLKVRSHDPEEAIRHDVIVSIVTAAKKDLLLVNDQLLNFVRERTLDKRWRVRKEAMMGLAQIYKKYSLQVEAGKESAKQISWIKDKLLHIYYQNSIDDRLLVERIFAQYMVPHNLETTERMKCLYYLYATLDTNAVKALNEMWKCQNMLRHHVKDLLDLIKKPKTEAGSKAIFSKVMVITKNLPDPGKGQDFLKKFTQVLEDDEKIRGQLEKLVSPTCSYKQAEVCVRDITKKLGNPKQPTNPFLEMIKFLLERIAPVHIDTESISSLIKLVNKSIDGTADDEDEGVPTDQAIRAGLELLKVLSFTHPISFHSAETFESLLACLKMDDEKVAEAALQIFKNTGNKIEEDFPHIRSALLPVLQQKAKKGSPRQAKYSIHCIHAIFSSKETQFAQIFEPLHKSLDPGNPEQLITSLVTIGHIAQLAPDQFTAPLKSMVATFVVKDLLMSDQLPGKKTTKLWVPDDEVSQETMVKIQAIKMMVRWLLGMKNNLSKSGNSTLRLLTAILHTDGDLTEHGKLSKPDMSRLRLAAGSAIVKLAQEPCYHEIITLEQYQLCALVINDECYQVRQLFAQKLHKGLSRLRLPLEYMAICALCAKDPVKERRAHARQCLVKNINVRREYLKQHAAVSEKLFSLLPEYVVPYTVHLLTHDPDYVKVQDIEQLKDIKECLWFVLEILMSKNENNSHAFIRKMVEYIKQTKDAQNPDDQKMNEKMYTVCDVAMNIIISKSTTYSLESPKDPVLPARFFTQPDKNFSNTKHYLPAELKSFFTPGKPKSTNVLGAVNKPLSSAGKQMQSKSSRMETVSNASSGSNPSSPGRIKGRLDSTELDQIEYEDYTMISSPLSGKKSDKRDDSDLLKSEVEKPRRGRKQPLIDPDDSFSMDELSKPAQEPKSRTSQRGRKRAAAASESEEQAWQEKRLKEDLLENEDEQNSPPKKGRRGRPPKSAKMAISKEEPPVTTPKRGRKNVVPIESPPTDEEDHLEISEEQDSENIDQKRKGRGSSKKTPQKSDSTDSALDTSRPTPQKRRGRPPKTPTVQQKKSHVGRPRKVVSKEPESEEEMEISQNSPALSENISNEEETADEEVVAPSTGRRRTAKKRRWIQRMKSELEGPLL</sequence>
<feature type="chain" id="PRO_0000287428" description="Sister chromatid cohesion protein PDS5 homolog B-B">
    <location>
        <begin position="1"/>
        <end position="1464"/>
    </location>
</feature>
<feature type="repeat" description="HEAT" evidence="4">
    <location>
        <begin position="383"/>
        <end position="419"/>
    </location>
</feature>
<feature type="DNA-binding region" description="A.T hook 1" evidence="4">
    <location>
        <begin position="1287"/>
        <end position="1299"/>
    </location>
</feature>
<feature type="DNA-binding region" description="A.T hook 2" evidence="4">
    <location>
        <begin position="1375"/>
        <end position="1387"/>
    </location>
</feature>
<feature type="DNA-binding region" description="A.T hook 3" evidence="4">
    <location>
        <begin position="1391"/>
        <end position="1403"/>
    </location>
</feature>
<feature type="region of interest" description="Disordered" evidence="5">
    <location>
        <begin position="1126"/>
        <end position="1464"/>
    </location>
</feature>
<feature type="compositionally biased region" description="Polar residues" evidence="5">
    <location>
        <begin position="1137"/>
        <end position="1155"/>
    </location>
</feature>
<feature type="compositionally biased region" description="Low complexity" evidence="5">
    <location>
        <begin position="1156"/>
        <end position="1168"/>
    </location>
</feature>
<feature type="compositionally biased region" description="Acidic residues" evidence="5">
    <location>
        <begin position="1177"/>
        <end position="1186"/>
    </location>
</feature>
<feature type="compositionally biased region" description="Basic and acidic residues" evidence="5">
    <location>
        <begin position="1197"/>
        <end position="1215"/>
    </location>
</feature>
<feature type="compositionally biased region" description="Basic and acidic residues" evidence="5">
    <location>
        <begin position="1234"/>
        <end position="1244"/>
    </location>
</feature>
<feature type="compositionally biased region" description="Basic and acidic residues" evidence="5">
    <location>
        <begin position="1265"/>
        <end position="1274"/>
    </location>
</feature>
<feature type="compositionally biased region" description="Basic residues" evidence="5">
    <location>
        <begin position="1286"/>
        <end position="1295"/>
    </location>
</feature>
<feature type="compositionally biased region" description="Acidic residues" evidence="5">
    <location>
        <begin position="1325"/>
        <end position="1342"/>
    </location>
</feature>
<feature type="compositionally biased region" description="Basic residues" evidence="5">
    <location>
        <begin position="1347"/>
        <end position="1357"/>
    </location>
</feature>
<feature type="compositionally biased region" description="Polar residues" evidence="5">
    <location>
        <begin position="1359"/>
        <end position="1373"/>
    </location>
</feature>
<feature type="compositionally biased region" description="Basic residues" evidence="5">
    <location>
        <begin position="1390"/>
        <end position="1400"/>
    </location>
</feature>
<feature type="compositionally biased region" description="Acidic residues" evidence="5">
    <location>
        <begin position="1425"/>
        <end position="1435"/>
    </location>
</feature>
<feature type="compositionally biased region" description="Basic residues" evidence="5">
    <location>
        <begin position="1441"/>
        <end position="1453"/>
    </location>
</feature>
<feature type="compositionally biased region" description="Basic and acidic residues" evidence="5">
    <location>
        <begin position="1455"/>
        <end position="1464"/>
    </location>
</feature>
<gene>
    <name type="primary">pds5b-b</name>
    <name type="synonym">aprin-b</name>
</gene>
<dbReference type="EMBL" id="BC086289">
    <property type="protein sequence ID" value="AAH86289.1"/>
    <property type="status" value="ALT_FRAME"/>
    <property type="molecule type" value="mRNA"/>
</dbReference>
<dbReference type="RefSeq" id="NP_001088643.2">
    <property type="nucleotide sequence ID" value="NM_001095174.2"/>
</dbReference>
<dbReference type="SMR" id="Q5U241"/>
<dbReference type="IntAct" id="Q5U241">
    <property type="interactions" value="1"/>
</dbReference>
<dbReference type="GeneID" id="495695"/>
<dbReference type="KEGG" id="xla:495695"/>
<dbReference type="AGR" id="Xenbase:XB-GENE-6041384"/>
<dbReference type="CTD" id="495695"/>
<dbReference type="Xenbase" id="XB-GENE-6041384">
    <property type="gene designation" value="pds5b.S"/>
</dbReference>
<dbReference type="OrthoDB" id="200660at2759"/>
<dbReference type="Proteomes" id="UP000186698">
    <property type="component" value="Chromosome 2S"/>
</dbReference>
<dbReference type="Bgee" id="495695">
    <property type="expression patterns" value="Expressed in egg cell and 19 other cell types or tissues"/>
</dbReference>
<dbReference type="GO" id="GO:0000785">
    <property type="term" value="C:chromatin"/>
    <property type="evidence" value="ECO:0000318"/>
    <property type="project" value="GO_Central"/>
</dbReference>
<dbReference type="GO" id="GO:0005634">
    <property type="term" value="C:nucleus"/>
    <property type="evidence" value="ECO:0000250"/>
    <property type="project" value="UniProtKB"/>
</dbReference>
<dbReference type="GO" id="GO:0003677">
    <property type="term" value="F:DNA binding"/>
    <property type="evidence" value="ECO:0007669"/>
    <property type="project" value="InterPro"/>
</dbReference>
<dbReference type="GO" id="GO:0051301">
    <property type="term" value="P:cell division"/>
    <property type="evidence" value="ECO:0007669"/>
    <property type="project" value="UniProtKB-KW"/>
</dbReference>
<dbReference type="GO" id="GO:0006281">
    <property type="term" value="P:DNA repair"/>
    <property type="evidence" value="ECO:0000318"/>
    <property type="project" value="GO_Central"/>
</dbReference>
<dbReference type="GO" id="GO:0007064">
    <property type="term" value="P:mitotic sister chromatid cohesion"/>
    <property type="evidence" value="ECO:0000250"/>
    <property type="project" value="UniProtKB"/>
</dbReference>
<dbReference type="GO" id="GO:0008285">
    <property type="term" value="P:negative regulation of cell population proliferation"/>
    <property type="evidence" value="ECO:0000250"/>
    <property type="project" value="UniProtKB"/>
</dbReference>
<dbReference type="CDD" id="cd19953">
    <property type="entry name" value="PDS5"/>
    <property type="match status" value="1"/>
</dbReference>
<dbReference type="FunFam" id="1.25.10.10:FF:001146">
    <property type="entry name" value="PDS5 cohesin associated factor B"/>
    <property type="match status" value="1"/>
</dbReference>
<dbReference type="FunFam" id="1.25.10.10:FF:000064">
    <property type="entry name" value="Sister chromatid cohesion protein PDS5 homolog A"/>
    <property type="match status" value="1"/>
</dbReference>
<dbReference type="Gene3D" id="1.25.10.10">
    <property type="entry name" value="Leucine-rich Repeat Variant"/>
    <property type="match status" value="2"/>
</dbReference>
<dbReference type="InterPro" id="IPR011989">
    <property type="entry name" value="ARM-like"/>
</dbReference>
<dbReference type="InterPro" id="IPR016024">
    <property type="entry name" value="ARM-type_fold"/>
</dbReference>
<dbReference type="InterPro" id="IPR017956">
    <property type="entry name" value="AT_hook_DNA-bd_motif"/>
</dbReference>
<dbReference type="InterPro" id="IPR039776">
    <property type="entry name" value="Pds5"/>
</dbReference>
<dbReference type="PANTHER" id="PTHR12663">
    <property type="entry name" value="ANDROGEN INDUCED INHIBITOR OF PROLIFERATION AS3 / PDS5-RELATED"/>
    <property type="match status" value="1"/>
</dbReference>
<dbReference type="PANTHER" id="PTHR12663:SF1">
    <property type="entry name" value="SISTER CHROMATID COHESION PROTEIN PDS5 HOMOLOG B"/>
    <property type="match status" value="1"/>
</dbReference>
<dbReference type="Pfam" id="PF20168">
    <property type="entry name" value="PDS5"/>
    <property type="match status" value="1"/>
</dbReference>
<dbReference type="SMART" id="SM00384">
    <property type="entry name" value="AT_hook"/>
    <property type="match status" value="3"/>
</dbReference>
<dbReference type="SUPFAM" id="SSF48371">
    <property type="entry name" value="ARM repeat"/>
    <property type="match status" value="1"/>
</dbReference>
<organism>
    <name type="scientific">Xenopus laevis</name>
    <name type="common">African clawed frog</name>
    <dbReference type="NCBI Taxonomy" id="8355"/>
    <lineage>
        <taxon>Eukaryota</taxon>
        <taxon>Metazoa</taxon>
        <taxon>Chordata</taxon>
        <taxon>Craniata</taxon>
        <taxon>Vertebrata</taxon>
        <taxon>Euteleostomi</taxon>
        <taxon>Amphibia</taxon>
        <taxon>Batrachia</taxon>
        <taxon>Anura</taxon>
        <taxon>Pipoidea</taxon>
        <taxon>Pipidae</taxon>
        <taxon>Xenopodinae</taxon>
        <taxon>Xenopus</taxon>
        <taxon>Xenopus</taxon>
    </lineage>
</organism>
<proteinExistence type="evidence at transcript level"/>
<reference evidence="7" key="1">
    <citation type="submission" date="2004-11" db="EMBL/GenBank/DDBJ databases">
        <authorList>
            <consortium name="NIH - Xenopus Gene Collection (XGC) project"/>
        </authorList>
    </citation>
    <scope>NUCLEOTIDE SEQUENCE [LARGE SCALE MRNA]</scope>
    <source>
        <tissue evidence="7">Eye</tissue>
    </source>
</reference>
<name>PD5BB_XENLA</name>
<accession>Q5U241</accession>
<protein>
    <recommendedName>
        <fullName>Sister chromatid cohesion protein PDS5 homolog B-B</fullName>
    </recommendedName>
    <alternativeName>
        <fullName>Androgen-induced proliferation inhibitor B</fullName>
    </alternativeName>
</protein>
<comment type="function">
    <text evidence="3">Plays a role in androgen-induced proliferative arrest. Required for maintenance of sister chromatid cohesion during mitosis (By similarity).</text>
</comment>
<comment type="subunit">
    <text evidence="3">Interacts with the cohesin complex.</text>
</comment>
<comment type="subcellular location">
    <subcellularLocation>
        <location evidence="2">Nucleus</location>
    </subcellularLocation>
</comment>
<comment type="PTM">
    <text evidence="1">Phosphorylated in mitotic cells.</text>
</comment>
<comment type="similarity">
    <text evidence="6">Belongs to the PDS5 family.</text>
</comment>
<comment type="sequence caution" evidence="6">
    <conflict type="frameshift">
        <sequence resource="EMBL-CDS" id="AAH86289"/>
    </conflict>
</comment>
<evidence type="ECO:0000250" key="1">
    <source>
        <dbReference type="UniProtKB" id="Q498H0"/>
    </source>
</evidence>
<evidence type="ECO:0000250" key="2">
    <source>
        <dbReference type="UniProtKB" id="Q6TRW4"/>
    </source>
</evidence>
<evidence type="ECO:0000250" key="3">
    <source>
        <dbReference type="UniProtKB" id="Q9NTI5"/>
    </source>
</evidence>
<evidence type="ECO:0000255" key="4"/>
<evidence type="ECO:0000256" key="5">
    <source>
        <dbReference type="SAM" id="MobiDB-lite"/>
    </source>
</evidence>
<evidence type="ECO:0000305" key="6"/>
<evidence type="ECO:0000312" key="7">
    <source>
        <dbReference type="EMBL" id="AAH86289.1"/>
    </source>
</evidence>
<keyword id="KW-0131">Cell cycle</keyword>
<keyword id="KW-0132">Cell division</keyword>
<keyword id="KW-0498">Mitosis</keyword>
<keyword id="KW-0539">Nucleus</keyword>
<keyword id="KW-0597">Phosphoprotein</keyword>
<keyword id="KW-1185">Reference proteome</keyword>
<keyword id="KW-0677">Repeat</keyword>